<name>SELU_SALPB</name>
<dbReference type="EC" id="2.9.1.3" evidence="1"/>
<dbReference type="EMBL" id="CP000886">
    <property type="protein sequence ID" value="ABX68414.1"/>
    <property type="molecule type" value="Genomic_DNA"/>
</dbReference>
<dbReference type="SMR" id="A9MW55"/>
<dbReference type="KEGG" id="spq:SPAB_03051"/>
<dbReference type="PATRIC" id="fig|1016998.12.peg.2879"/>
<dbReference type="HOGENOM" id="CLU_043456_1_0_6"/>
<dbReference type="BioCyc" id="SENT1016998:SPAB_RS12455-MONOMER"/>
<dbReference type="Proteomes" id="UP000008556">
    <property type="component" value="Chromosome"/>
</dbReference>
<dbReference type="GO" id="GO:0016765">
    <property type="term" value="F:transferase activity, transferring alkyl or aryl (other than methyl) groups"/>
    <property type="evidence" value="ECO:0007669"/>
    <property type="project" value="UniProtKB-UniRule"/>
</dbReference>
<dbReference type="GO" id="GO:0043828">
    <property type="term" value="F:tRNA 2-selenouridine synthase activity"/>
    <property type="evidence" value="ECO:0007669"/>
    <property type="project" value="UniProtKB-EC"/>
</dbReference>
<dbReference type="GO" id="GO:0002098">
    <property type="term" value="P:tRNA wobble uridine modification"/>
    <property type="evidence" value="ECO:0007669"/>
    <property type="project" value="UniProtKB-UniRule"/>
</dbReference>
<dbReference type="CDD" id="cd01520">
    <property type="entry name" value="RHOD_YbbB"/>
    <property type="match status" value="1"/>
</dbReference>
<dbReference type="FunFam" id="3.40.250.10:FF:000009">
    <property type="entry name" value="tRNA 2-selenouridine/geranyl-2-thiouridine synthase"/>
    <property type="match status" value="1"/>
</dbReference>
<dbReference type="Gene3D" id="3.40.250.10">
    <property type="entry name" value="Rhodanese-like domain"/>
    <property type="match status" value="1"/>
</dbReference>
<dbReference type="HAMAP" id="MF_01622">
    <property type="entry name" value="tRNA_sel_U_synth"/>
    <property type="match status" value="1"/>
</dbReference>
<dbReference type="InterPro" id="IPR001763">
    <property type="entry name" value="Rhodanese-like_dom"/>
</dbReference>
<dbReference type="InterPro" id="IPR036873">
    <property type="entry name" value="Rhodanese-like_dom_sf"/>
</dbReference>
<dbReference type="InterPro" id="IPR017582">
    <property type="entry name" value="SelU"/>
</dbReference>
<dbReference type="NCBIfam" id="NF008749">
    <property type="entry name" value="PRK11784.1-1"/>
    <property type="match status" value="1"/>
</dbReference>
<dbReference type="NCBIfam" id="NF008751">
    <property type="entry name" value="PRK11784.1-3"/>
    <property type="match status" value="1"/>
</dbReference>
<dbReference type="NCBIfam" id="TIGR03167">
    <property type="entry name" value="tRNA_sel_U_synt"/>
    <property type="match status" value="1"/>
</dbReference>
<dbReference type="PANTHER" id="PTHR30401">
    <property type="entry name" value="TRNA 2-SELENOURIDINE SYNTHASE"/>
    <property type="match status" value="1"/>
</dbReference>
<dbReference type="PANTHER" id="PTHR30401:SF0">
    <property type="entry name" value="TRNA 2-SELENOURIDINE SYNTHASE"/>
    <property type="match status" value="1"/>
</dbReference>
<dbReference type="Pfam" id="PF00581">
    <property type="entry name" value="Rhodanese"/>
    <property type="match status" value="1"/>
</dbReference>
<dbReference type="SMART" id="SM00450">
    <property type="entry name" value="RHOD"/>
    <property type="match status" value="1"/>
</dbReference>
<dbReference type="SUPFAM" id="SSF52821">
    <property type="entry name" value="Rhodanese/Cell cycle control phosphatase"/>
    <property type="match status" value="1"/>
</dbReference>
<dbReference type="PROSITE" id="PS50206">
    <property type="entry name" value="RHODANESE_3"/>
    <property type="match status" value="1"/>
</dbReference>
<comment type="function">
    <text evidence="1">Involved in the post-transcriptional modification of the uridine at the wobble position (U34) of tRNA(Lys), tRNA(Glu) and tRNA(Gln). Catalyzes the conversion of 2-thiouridine (S2U-RNA) to 2-selenouridine (Se2U-RNA). Acts in a two-step process involving geranylation of 2-thiouridine (S2U) to S-geranyl-2-thiouridine (geS2U) and subsequent selenation of the latter derivative to 2-selenouridine (Se2U) in the tRNA chain.</text>
</comment>
<comment type="catalytic activity">
    <reaction evidence="1">
        <text>5-methylaminomethyl-2-thiouridine(34) in tRNA + selenophosphate + (2E)-geranyl diphosphate + H2O + H(+) = 5-methylaminomethyl-2-selenouridine(34) in tRNA + (2E)-thiogeraniol + phosphate + diphosphate</text>
        <dbReference type="Rhea" id="RHEA:42716"/>
        <dbReference type="Rhea" id="RHEA-COMP:10195"/>
        <dbReference type="Rhea" id="RHEA-COMP:10196"/>
        <dbReference type="ChEBI" id="CHEBI:15377"/>
        <dbReference type="ChEBI" id="CHEBI:15378"/>
        <dbReference type="ChEBI" id="CHEBI:16144"/>
        <dbReference type="ChEBI" id="CHEBI:33019"/>
        <dbReference type="ChEBI" id="CHEBI:43474"/>
        <dbReference type="ChEBI" id="CHEBI:58057"/>
        <dbReference type="ChEBI" id="CHEBI:74455"/>
        <dbReference type="ChEBI" id="CHEBI:82743"/>
        <dbReference type="ChEBI" id="CHEBI:143703"/>
        <dbReference type="EC" id="2.9.1.3"/>
    </reaction>
    <physiologicalReaction direction="left-to-right" evidence="1">
        <dbReference type="Rhea" id="RHEA:42717"/>
    </physiologicalReaction>
</comment>
<comment type="catalytic activity">
    <reaction evidence="1">
        <text>5-methylaminomethyl-2-thiouridine(34) in tRNA + (2E)-geranyl diphosphate = 5-methylaminomethyl-S-(2E)-geranyl-thiouridine(34) in tRNA + diphosphate</text>
        <dbReference type="Rhea" id="RHEA:14085"/>
        <dbReference type="Rhea" id="RHEA-COMP:10195"/>
        <dbReference type="Rhea" id="RHEA-COMP:14654"/>
        <dbReference type="ChEBI" id="CHEBI:33019"/>
        <dbReference type="ChEBI" id="CHEBI:58057"/>
        <dbReference type="ChEBI" id="CHEBI:74455"/>
        <dbReference type="ChEBI" id="CHEBI:140632"/>
    </reaction>
    <physiologicalReaction direction="left-to-right" evidence="1">
        <dbReference type="Rhea" id="RHEA:14086"/>
    </physiologicalReaction>
</comment>
<comment type="catalytic activity">
    <reaction evidence="1">
        <text>5-methylaminomethyl-S-(2E)-geranyl-thiouridine(34) in tRNA + selenophosphate + H(+) = 5-methylaminomethyl-2-(Se-phospho)selenouridine(34) in tRNA + (2E)-thiogeraniol</text>
        <dbReference type="Rhea" id="RHEA:60172"/>
        <dbReference type="Rhea" id="RHEA-COMP:14654"/>
        <dbReference type="Rhea" id="RHEA-COMP:15523"/>
        <dbReference type="ChEBI" id="CHEBI:15378"/>
        <dbReference type="ChEBI" id="CHEBI:16144"/>
        <dbReference type="ChEBI" id="CHEBI:140632"/>
        <dbReference type="ChEBI" id="CHEBI:143702"/>
        <dbReference type="ChEBI" id="CHEBI:143703"/>
    </reaction>
    <physiologicalReaction direction="left-to-right" evidence="1">
        <dbReference type="Rhea" id="RHEA:60173"/>
    </physiologicalReaction>
</comment>
<comment type="catalytic activity">
    <reaction evidence="1">
        <text>5-methylaminomethyl-2-(Se-phospho)selenouridine(34) in tRNA + H2O = 5-methylaminomethyl-2-selenouridine(34) in tRNA + phosphate</text>
        <dbReference type="Rhea" id="RHEA:60176"/>
        <dbReference type="Rhea" id="RHEA-COMP:10196"/>
        <dbReference type="Rhea" id="RHEA-COMP:15523"/>
        <dbReference type="ChEBI" id="CHEBI:15377"/>
        <dbReference type="ChEBI" id="CHEBI:43474"/>
        <dbReference type="ChEBI" id="CHEBI:82743"/>
        <dbReference type="ChEBI" id="CHEBI:143702"/>
    </reaction>
    <physiologicalReaction direction="left-to-right" evidence="1">
        <dbReference type="Rhea" id="RHEA:60177"/>
    </physiologicalReaction>
</comment>
<comment type="subunit">
    <text evidence="1">Monomer.</text>
</comment>
<comment type="similarity">
    <text evidence="1">Belongs to the SelU family.</text>
</comment>
<proteinExistence type="inferred from homology"/>
<evidence type="ECO:0000255" key="1">
    <source>
        <dbReference type="HAMAP-Rule" id="MF_01622"/>
    </source>
</evidence>
<organism>
    <name type="scientific">Salmonella paratyphi B (strain ATCC BAA-1250 / SPB7)</name>
    <dbReference type="NCBI Taxonomy" id="1016998"/>
    <lineage>
        <taxon>Bacteria</taxon>
        <taxon>Pseudomonadati</taxon>
        <taxon>Pseudomonadota</taxon>
        <taxon>Gammaproteobacteria</taxon>
        <taxon>Enterobacterales</taxon>
        <taxon>Enterobacteriaceae</taxon>
        <taxon>Salmonella</taxon>
    </lineage>
</organism>
<protein>
    <recommendedName>
        <fullName evidence="1">tRNA 2-selenouridine synthase</fullName>
        <ecNumber evidence="1">2.9.1.3</ecNumber>
    </recommendedName>
</protein>
<feature type="chain" id="PRO_1000088088" description="tRNA 2-selenouridine synthase">
    <location>
        <begin position="1"/>
        <end position="364"/>
    </location>
</feature>
<feature type="domain" description="Rhodanese" evidence="1">
    <location>
        <begin position="14"/>
        <end position="137"/>
    </location>
</feature>
<feature type="active site" description="S-selanylcysteine intermediate" evidence="1">
    <location>
        <position position="97"/>
    </location>
</feature>
<accession>A9MW55</accession>
<keyword id="KW-0711">Selenium</keyword>
<keyword id="KW-0808">Transferase</keyword>
<sequence length="364" mass="41280">MQDRQKAQDYRALLLADTPLIDVRAPIEFEQGAMPGAINLPLMMGDERAAVGTCYKRQGADAALALGHRLVCGDIRQQRLEAWKAAYQRFPNGYLCCARGGQRSHIVQRWLKETGIDCPLIEGGYKALRQTAIQATWQLAQKPILLIGGCTGSGKTQLVRQQPNGVDLEGLARHRGSSFGRTLKPQLSQASFENKLAVELLKINARQTLKRWVLEDEGRTIGANHLPECLRERMAQAPIAVVEDPFALRLERLREEYFIRMHHDFTHAYGDEAGWQAYSEYLHHGLFAIRRRLGLQRFAELTDTLDRALAEQLSSGSTDGHMAWLVPLLNEYYDPMYRYQLEKKAANIVFRGPWQDVANWLKAQ</sequence>
<reference key="1">
    <citation type="submission" date="2007-11" db="EMBL/GenBank/DDBJ databases">
        <authorList>
            <consortium name="The Salmonella enterica serovar Paratyphi B Genome Sequencing Project"/>
            <person name="McClelland M."/>
            <person name="Sanderson E.K."/>
            <person name="Porwollik S."/>
            <person name="Spieth J."/>
            <person name="Clifton W.S."/>
            <person name="Fulton R."/>
            <person name="Cordes M."/>
            <person name="Wollam A."/>
            <person name="Shah N."/>
            <person name="Pepin K."/>
            <person name="Bhonagiri V."/>
            <person name="Nash W."/>
            <person name="Johnson M."/>
            <person name="Thiruvilangam P."/>
            <person name="Wilson R."/>
        </authorList>
    </citation>
    <scope>NUCLEOTIDE SEQUENCE [LARGE SCALE GENOMIC DNA]</scope>
    <source>
        <strain>ATCC BAA-1250 / SPB7</strain>
    </source>
</reference>
<gene>
    <name evidence="1" type="primary">selU</name>
    <name type="ordered locus">SPAB_03051</name>
</gene>